<proteinExistence type="inferred from homology"/>
<feature type="chain" id="PRO_0000128479" description="Small ribosomal subunit protein uS17">
    <location>
        <begin position="1"/>
        <end position="87"/>
    </location>
</feature>
<reference key="1">
    <citation type="journal article" date="2001" name="Lancet">
        <title>Whole genome sequencing of meticillin-resistant Staphylococcus aureus.</title>
        <authorList>
            <person name="Kuroda M."/>
            <person name="Ohta T."/>
            <person name="Uchiyama I."/>
            <person name="Baba T."/>
            <person name="Yuzawa H."/>
            <person name="Kobayashi I."/>
            <person name="Cui L."/>
            <person name="Oguchi A."/>
            <person name="Aoki K."/>
            <person name="Nagai Y."/>
            <person name="Lian J.-Q."/>
            <person name="Ito T."/>
            <person name="Kanamori M."/>
            <person name="Matsumaru H."/>
            <person name="Maruyama A."/>
            <person name="Murakami H."/>
            <person name="Hosoyama A."/>
            <person name="Mizutani-Ui Y."/>
            <person name="Takahashi N.K."/>
            <person name="Sawano T."/>
            <person name="Inoue R."/>
            <person name="Kaito C."/>
            <person name="Sekimizu K."/>
            <person name="Hirakawa H."/>
            <person name="Kuhara S."/>
            <person name="Goto S."/>
            <person name="Yabuzaki J."/>
            <person name="Kanehisa M."/>
            <person name="Yamashita A."/>
            <person name="Oshima K."/>
            <person name="Furuya K."/>
            <person name="Yoshino C."/>
            <person name="Shiba T."/>
            <person name="Hattori M."/>
            <person name="Ogasawara N."/>
            <person name="Hayashi H."/>
            <person name="Hiramatsu K."/>
        </authorList>
    </citation>
    <scope>NUCLEOTIDE SEQUENCE [LARGE SCALE GENOMIC DNA]</scope>
    <source>
        <strain>Mu50 / ATCC 700699</strain>
    </source>
</reference>
<accession>Q99S30</accession>
<dbReference type="EMBL" id="BA000017">
    <property type="protein sequence ID" value="BAB58403.1"/>
    <property type="molecule type" value="Genomic_DNA"/>
</dbReference>
<dbReference type="RefSeq" id="WP_000004085.1">
    <property type="nucleotide sequence ID" value="NC_002758.2"/>
</dbReference>
<dbReference type="SMR" id="Q99S30"/>
<dbReference type="KEGG" id="sav:SAV2241"/>
<dbReference type="HOGENOM" id="CLU_073626_1_0_9"/>
<dbReference type="PhylomeDB" id="Q99S30"/>
<dbReference type="Proteomes" id="UP000002481">
    <property type="component" value="Chromosome"/>
</dbReference>
<dbReference type="GO" id="GO:0022627">
    <property type="term" value="C:cytosolic small ribosomal subunit"/>
    <property type="evidence" value="ECO:0007669"/>
    <property type="project" value="TreeGrafter"/>
</dbReference>
<dbReference type="GO" id="GO:0019843">
    <property type="term" value="F:rRNA binding"/>
    <property type="evidence" value="ECO:0007669"/>
    <property type="project" value="UniProtKB-UniRule"/>
</dbReference>
<dbReference type="GO" id="GO:0003735">
    <property type="term" value="F:structural constituent of ribosome"/>
    <property type="evidence" value="ECO:0007669"/>
    <property type="project" value="InterPro"/>
</dbReference>
<dbReference type="GO" id="GO:0006412">
    <property type="term" value="P:translation"/>
    <property type="evidence" value="ECO:0007669"/>
    <property type="project" value="UniProtKB-UniRule"/>
</dbReference>
<dbReference type="CDD" id="cd00364">
    <property type="entry name" value="Ribosomal_uS17"/>
    <property type="match status" value="1"/>
</dbReference>
<dbReference type="FunFam" id="2.40.50.140:FF:000026">
    <property type="entry name" value="30S ribosomal protein S17"/>
    <property type="match status" value="1"/>
</dbReference>
<dbReference type="Gene3D" id="2.40.50.140">
    <property type="entry name" value="Nucleic acid-binding proteins"/>
    <property type="match status" value="1"/>
</dbReference>
<dbReference type="HAMAP" id="MF_01345_B">
    <property type="entry name" value="Ribosomal_uS17_B"/>
    <property type="match status" value="1"/>
</dbReference>
<dbReference type="InterPro" id="IPR012340">
    <property type="entry name" value="NA-bd_OB-fold"/>
</dbReference>
<dbReference type="InterPro" id="IPR000266">
    <property type="entry name" value="Ribosomal_uS17"/>
</dbReference>
<dbReference type="InterPro" id="IPR019984">
    <property type="entry name" value="Ribosomal_uS17_bact/chlr"/>
</dbReference>
<dbReference type="InterPro" id="IPR019979">
    <property type="entry name" value="Ribosomal_uS17_CS"/>
</dbReference>
<dbReference type="NCBIfam" id="NF004123">
    <property type="entry name" value="PRK05610.1"/>
    <property type="match status" value="1"/>
</dbReference>
<dbReference type="NCBIfam" id="TIGR03635">
    <property type="entry name" value="uS17_bact"/>
    <property type="match status" value="1"/>
</dbReference>
<dbReference type="PANTHER" id="PTHR10744">
    <property type="entry name" value="40S RIBOSOMAL PROTEIN S11 FAMILY MEMBER"/>
    <property type="match status" value="1"/>
</dbReference>
<dbReference type="PANTHER" id="PTHR10744:SF1">
    <property type="entry name" value="SMALL RIBOSOMAL SUBUNIT PROTEIN US17M"/>
    <property type="match status" value="1"/>
</dbReference>
<dbReference type="Pfam" id="PF00366">
    <property type="entry name" value="Ribosomal_S17"/>
    <property type="match status" value="1"/>
</dbReference>
<dbReference type="PRINTS" id="PR00973">
    <property type="entry name" value="RIBOSOMALS17"/>
</dbReference>
<dbReference type="SUPFAM" id="SSF50249">
    <property type="entry name" value="Nucleic acid-binding proteins"/>
    <property type="match status" value="1"/>
</dbReference>
<dbReference type="PROSITE" id="PS00056">
    <property type="entry name" value="RIBOSOMAL_S17"/>
    <property type="match status" value="1"/>
</dbReference>
<name>RS17_STAAM</name>
<keyword id="KW-0687">Ribonucleoprotein</keyword>
<keyword id="KW-0689">Ribosomal protein</keyword>
<keyword id="KW-0694">RNA-binding</keyword>
<keyword id="KW-0699">rRNA-binding</keyword>
<comment type="function">
    <text evidence="1">One of the primary rRNA binding proteins, it binds specifically to the 5'-end of 16S ribosomal RNA.</text>
</comment>
<comment type="subunit">
    <text evidence="1">Part of the 30S ribosomal subunit.</text>
</comment>
<comment type="similarity">
    <text evidence="1">Belongs to the universal ribosomal protein uS17 family.</text>
</comment>
<organism>
    <name type="scientific">Staphylococcus aureus (strain Mu50 / ATCC 700699)</name>
    <dbReference type="NCBI Taxonomy" id="158878"/>
    <lineage>
        <taxon>Bacteria</taxon>
        <taxon>Bacillati</taxon>
        <taxon>Bacillota</taxon>
        <taxon>Bacilli</taxon>
        <taxon>Bacillales</taxon>
        <taxon>Staphylococcaceae</taxon>
        <taxon>Staphylococcus</taxon>
    </lineage>
</organism>
<protein>
    <recommendedName>
        <fullName evidence="1">Small ribosomal subunit protein uS17</fullName>
    </recommendedName>
    <alternativeName>
        <fullName evidence="2">30S ribosomal protein S17</fullName>
    </alternativeName>
</protein>
<gene>
    <name evidence="1" type="primary">rpsQ</name>
    <name type="ordered locus">SAV2241</name>
</gene>
<sequence length="87" mass="10175">MSERNDRKVYVGKVVSDKMDKTITVLVETYKTHKLYGKRVKYSKKYKTHDENNSAKLGDIVKIQETRPLSATKRFRIVEIVEESVII</sequence>
<evidence type="ECO:0000255" key="1">
    <source>
        <dbReference type="HAMAP-Rule" id="MF_01345"/>
    </source>
</evidence>
<evidence type="ECO:0000305" key="2"/>